<proteinExistence type="inferred from homology"/>
<keyword id="KW-0143">Chaperone</keyword>
<keyword id="KW-0539">Nucleus</keyword>
<keyword id="KW-1185">Reference proteome</keyword>
<accession>B0D1Q8</accession>
<organism>
    <name type="scientific">Laccaria bicolor (strain S238N-H82 / ATCC MYA-4686)</name>
    <name type="common">Bicoloured deceiver</name>
    <name type="synonym">Laccaria laccata var. bicolor</name>
    <dbReference type="NCBI Taxonomy" id="486041"/>
    <lineage>
        <taxon>Eukaryota</taxon>
        <taxon>Fungi</taxon>
        <taxon>Dikarya</taxon>
        <taxon>Basidiomycota</taxon>
        <taxon>Agaricomycotina</taxon>
        <taxon>Agaricomycetes</taxon>
        <taxon>Agaricomycetidae</taxon>
        <taxon>Agaricales</taxon>
        <taxon>Agaricineae</taxon>
        <taxon>Hydnangiaceae</taxon>
        <taxon>Laccaria</taxon>
    </lineage>
</organism>
<name>CHZ1_LACBS</name>
<sequence length="118" mass="13040">MSSNVTSPSGNKNKSSHANASPSSKGKAKAKVDHPMDEDEEEEEEEEQGGSDEEEDDDEDEDALEEIDPSVILPQGRRTRGVRVDYTSKEALAKAGFKGKEELEEDDTEDDHDVQMKD</sequence>
<evidence type="ECO:0000250" key="1"/>
<evidence type="ECO:0000256" key="2">
    <source>
        <dbReference type="SAM" id="MobiDB-lite"/>
    </source>
</evidence>
<evidence type="ECO:0000305" key="3"/>
<dbReference type="EMBL" id="DS547095">
    <property type="protein sequence ID" value="EDR11682.1"/>
    <property type="molecule type" value="Genomic_DNA"/>
</dbReference>
<dbReference type="RefSeq" id="XP_001877579.1">
    <property type="nucleotide sequence ID" value="XM_001877544.1"/>
</dbReference>
<dbReference type="STRING" id="486041.B0D1Q8"/>
<dbReference type="GeneID" id="6072998"/>
<dbReference type="KEGG" id="lbc:LACBIDRAFT_293231"/>
<dbReference type="HOGENOM" id="CLU_130004_0_1_1"/>
<dbReference type="InParanoid" id="B0D1Q8"/>
<dbReference type="OrthoDB" id="3364766at2759"/>
<dbReference type="Proteomes" id="UP000001194">
    <property type="component" value="Unassembled WGS sequence"/>
</dbReference>
<dbReference type="GO" id="GO:0005634">
    <property type="term" value="C:nucleus"/>
    <property type="evidence" value="ECO:0007669"/>
    <property type="project" value="UniProtKB-SubCell"/>
</dbReference>
<dbReference type="InterPro" id="IPR019098">
    <property type="entry name" value="Histone_chaperone_domain_CHZ"/>
</dbReference>
<dbReference type="Pfam" id="PF09649">
    <property type="entry name" value="CHZ"/>
    <property type="match status" value="1"/>
</dbReference>
<dbReference type="SMART" id="SM01082">
    <property type="entry name" value="CHZ"/>
    <property type="match status" value="1"/>
</dbReference>
<protein>
    <recommendedName>
        <fullName>Histone H2A.Z-specific chaperone CHZ1</fullName>
    </recommendedName>
</protein>
<comment type="function">
    <text evidence="1">Forms a chaperone-bound H2A.Z-H2B complex that acts as a source for SWR1 complex-dependent H2A to H2A.Z histone replacement in chromatin.</text>
</comment>
<comment type="subunit">
    <text evidence="1">Forms a heterotrimer with H2A.Z-H2B, stabilizing the association of the histone dimer. Also, with a lower affinity, forms a heterotrimer with H2A-H2B (By similarity).</text>
</comment>
<comment type="subcellular location">
    <subcellularLocation>
        <location evidence="1">Nucleus</location>
    </subcellularLocation>
</comment>
<comment type="similarity">
    <text evidence="3">Belongs to the CHZ1 family.</text>
</comment>
<gene>
    <name type="primary">CHZ1</name>
    <name type="ORF">LACBIDRAFT_293231</name>
</gene>
<feature type="chain" id="PRO_0000330212" description="Histone H2A.Z-specific chaperone CHZ1">
    <location>
        <begin position="1"/>
        <end position="118"/>
    </location>
</feature>
<feature type="region of interest" description="Disordered" evidence="2">
    <location>
        <begin position="1"/>
        <end position="118"/>
    </location>
</feature>
<feature type="compositionally biased region" description="Polar residues" evidence="2">
    <location>
        <begin position="1"/>
        <end position="17"/>
    </location>
</feature>
<feature type="compositionally biased region" description="Acidic residues" evidence="2">
    <location>
        <begin position="36"/>
        <end position="68"/>
    </location>
</feature>
<feature type="compositionally biased region" description="Basic and acidic residues" evidence="2">
    <location>
        <begin position="82"/>
        <end position="92"/>
    </location>
</feature>
<feature type="compositionally biased region" description="Acidic residues" evidence="2">
    <location>
        <begin position="102"/>
        <end position="112"/>
    </location>
</feature>
<reference key="1">
    <citation type="journal article" date="2008" name="Nature">
        <title>The genome of Laccaria bicolor provides insights into mycorrhizal symbiosis.</title>
        <authorList>
            <person name="Martin F."/>
            <person name="Aerts A."/>
            <person name="Ahren D."/>
            <person name="Brun A."/>
            <person name="Danchin E.G.J."/>
            <person name="Duchaussoy F."/>
            <person name="Gibon J."/>
            <person name="Kohler A."/>
            <person name="Lindquist E."/>
            <person name="Pereda V."/>
            <person name="Salamov A."/>
            <person name="Shapiro H.J."/>
            <person name="Wuyts J."/>
            <person name="Blaudez D."/>
            <person name="Buee M."/>
            <person name="Brokstein P."/>
            <person name="Canbaeck B."/>
            <person name="Cohen D."/>
            <person name="Courty P.E."/>
            <person name="Coutinho P.M."/>
            <person name="Delaruelle C."/>
            <person name="Detter J.C."/>
            <person name="Deveau A."/>
            <person name="DiFazio S."/>
            <person name="Duplessis S."/>
            <person name="Fraissinet-Tachet L."/>
            <person name="Lucic E."/>
            <person name="Frey-Klett P."/>
            <person name="Fourrey C."/>
            <person name="Feussner I."/>
            <person name="Gay G."/>
            <person name="Grimwood J."/>
            <person name="Hoegger P.J."/>
            <person name="Jain P."/>
            <person name="Kilaru S."/>
            <person name="Labbe J."/>
            <person name="Lin Y.C."/>
            <person name="Legue V."/>
            <person name="Le Tacon F."/>
            <person name="Marmeisse R."/>
            <person name="Melayah D."/>
            <person name="Montanini B."/>
            <person name="Muratet M."/>
            <person name="Nehls U."/>
            <person name="Niculita-Hirzel H."/>
            <person name="Oudot-Le Secq M.P."/>
            <person name="Peter M."/>
            <person name="Quesneville H."/>
            <person name="Rajashekar B."/>
            <person name="Reich M."/>
            <person name="Rouhier N."/>
            <person name="Schmutz J."/>
            <person name="Yin T."/>
            <person name="Chalot M."/>
            <person name="Henrissat B."/>
            <person name="Kuees U."/>
            <person name="Lucas S."/>
            <person name="Van de Peer Y."/>
            <person name="Podila G.K."/>
            <person name="Polle A."/>
            <person name="Pukkila P.J."/>
            <person name="Richardson P.M."/>
            <person name="Rouze P."/>
            <person name="Sanders I.R."/>
            <person name="Stajich J.E."/>
            <person name="Tunlid A."/>
            <person name="Tuskan G."/>
            <person name="Grigoriev I.V."/>
        </authorList>
    </citation>
    <scope>NUCLEOTIDE SEQUENCE [LARGE SCALE GENOMIC DNA]</scope>
    <source>
        <strain>S238N-H82 / ATCC MYA-4686</strain>
    </source>
</reference>